<name>DNAK_RHIWR</name>
<keyword id="KW-0067">ATP-binding</keyword>
<keyword id="KW-0143">Chaperone</keyword>
<keyword id="KW-0547">Nucleotide-binding</keyword>
<keyword id="KW-0597">Phosphoprotein</keyword>
<keyword id="KW-1185">Reference proteome</keyword>
<keyword id="KW-0346">Stress response</keyword>
<comment type="function">
    <text evidence="1">Acts as a chaperone.</text>
</comment>
<comment type="induction">
    <text evidence="1">By stress conditions e.g. heat shock.</text>
</comment>
<comment type="similarity">
    <text evidence="1">Belongs to the heat shock protein 70 family.</text>
</comment>
<organism>
    <name type="scientific">Rhizorhabdus wittichii (strain DSM 6014 / CCUG 31198 / JCM 15750 / NBRC 105917 / EY 4224 / RW1)</name>
    <name type="common">Sphingomonas wittichii</name>
    <dbReference type="NCBI Taxonomy" id="392499"/>
    <lineage>
        <taxon>Bacteria</taxon>
        <taxon>Pseudomonadati</taxon>
        <taxon>Pseudomonadota</taxon>
        <taxon>Alphaproteobacteria</taxon>
        <taxon>Sphingomonadales</taxon>
        <taxon>Sphingomonadaceae</taxon>
        <taxon>Rhizorhabdus</taxon>
    </lineage>
</organism>
<dbReference type="EMBL" id="CP000699">
    <property type="protein sequence ID" value="ABQ67615.1"/>
    <property type="molecule type" value="Genomic_DNA"/>
</dbReference>
<dbReference type="SMR" id="A5V5P9"/>
<dbReference type="STRING" id="392499.Swit_1250"/>
<dbReference type="PaxDb" id="392499-Swit_1250"/>
<dbReference type="KEGG" id="swi:Swit_1250"/>
<dbReference type="eggNOG" id="COG0443">
    <property type="taxonomic scope" value="Bacteria"/>
</dbReference>
<dbReference type="HOGENOM" id="CLU_005965_2_1_5"/>
<dbReference type="OrthoDB" id="9766019at2"/>
<dbReference type="Proteomes" id="UP000001989">
    <property type="component" value="Chromosome"/>
</dbReference>
<dbReference type="GO" id="GO:0005524">
    <property type="term" value="F:ATP binding"/>
    <property type="evidence" value="ECO:0007669"/>
    <property type="project" value="UniProtKB-UniRule"/>
</dbReference>
<dbReference type="GO" id="GO:0140662">
    <property type="term" value="F:ATP-dependent protein folding chaperone"/>
    <property type="evidence" value="ECO:0007669"/>
    <property type="project" value="InterPro"/>
</dbReference>
<dbReference type="GO" id="GO:0051082">
    <property type="term" value="F:unfolded protein binding"/>
    <property type="evidence" value="ECO:0007669"/>
    <property type="project" value="InterPro"/>
</dbReference>
<dbReference type="CDD" id="cd10234">
    <property type="entry name" value="ASKHA_NBD_HSP70_DnaK-like"/>
    <property type="match status" value="1"/>
</dbReference>
<dbReference type="FunFam" id="2.60.34.10:FF:000014">
    <property type="entry name" value="Chaperone protein DnaK HSP70"/>
    <property type="match status" value="1"/>
</dbReference>
<dbReference type="FunFam" id="3.30.420.40:FF:000020">
    <property type="entry name" value="Chaperone protein HscA homolog"/>
    <property type="match status" value="1"/>
</dbReference>
<dbReference type="FunFam" id="1.20.1270.10:FF:000001">
    <property type="entry name" value="Molecular chaperone DnaK"/>
    <property type="match status" value="1"/>
</dbReference>
<dbReference type="FunFam" id="3.30.420.40:FF:000004">
    <property type="entry name" value="Molecular chaperone DnaK"/>
    <property type="match status" value="1"/>
</dbReference>
<dbReference type="FunFam" id="3.90.640.10:FF:000003">
    <property type="entry name" value="Molecular chaperone DnaK"/>
    <property type="match status" value="1"/>
</dbReference>
<dbReference type="Gene3D" id="1.20.1270.10">
    <property type="match status" value="1"/>
</dbReference>
<dbReference type="Gene3D" id="3.30.420.40">
    <property type="match status" value="2"/>
</dbReference>
<dbReference type="Gene3D" id="3.90.640.10">
    <property type="entry name" value="Actin, Chain A, domain 4"/>
    <property type="match status" value="1"/>
</dbReference>
<dbReference type="Gene3D" id="2.60.34.10">
    <property type="entry name" value="Substrate Binding Domain Of DNAk, Chain A, domain 1"/>
    <property type="match status" value="1"/>
</dbReference>
<dbReference type="HAMAP" id="MF_00332">
    <property type="entry name" value="DnaK"/>
    <property type="match status" value="1"/>
</dbReference>
<dbReference type="InterPro" id="IPR043129">
    <property type="entry name" value="ATPase_NBD"/>
</dbReference>
<dbReference type="InterPro" id="IPR012725">
    <property type="entry name" value="Chaperone_DnaK"/>
</dbReference>
<dbReference type="InterPro" id="IPR018181">
    <property type="entry name" value="Heat_shock_70_CS"/>
</dbReference>
<dbReference type="InterPro" id="IPR029048">
    <property type="entry name" value="HSP70_C_sf"/>
</dbReference>
<dbReference type="InterPro" id="IPR029047">
    <property type="entry name" value="HSP70_peptide-bd_sf"/>
</dbReference>
<dbReference type="InterPro" id="IPR013126">
    <property type="entry name" value="Hsp_70_fam"/>
</dbReference>
<dbReference type="NCBIfam" id="NF001413">
    <property type="entry name" value="PRK00290.1"/>
    <property type="match status" value="1"/>
</dbReference>
<dbReference type="NCBIfam" id="NF003520">
    <property type="entry name" value="PRK05183.1"/>
    <property type="match status" value="1"/>
</dbReference>
<dbReference type="NCBIfam" id="TIGR02350">
    <property type="entry name" value="prok_dnaK"/>
    <property type="match status" value="1"/>
</dbReference>
<dbReference type="PANTHER" id="PTHR19375">
    <property type="entry name" value="HEAT SHOCK PROTEIN 70KDA"/>
    <property type="match status" value="1"/>
</dbReference>
<dbReference type="Pfam" id="PF00012">
    <property type="entry name" value="HSP70"/>
    <property type="match status" value="1"/>
</dbReference>
<dbReference type="PRINTS" id="PR00301">
    <property type="entry name" value="HEATSHOCK70"/>
</dbReference>
<dbReference type="SUPFAM" id="SSF53067">
    <property type="entry name" value="Actin-like ATPase domain"/>
    <property type="match status" value="2"/>
</dbReference>
<dbReference type="SUPFAM" id="SSF100934">
    <property type="entry name" value="Heat shock protein 70kD (HSP70), C-terminal subdomain"/>
    <property type="match status" value="1"/>
</dbReference>
<dbReference type="SUPFAM" id="SSF100920">
    <property type="entry name" value="Heat shock protein 70kD (HSP70), peptide-binding domain"/>
    <property type="match status" value="1"/>
</dbReference>
<dbReference type="PROSITE" id="PS00297">
    <property type="entry name" value="HSP70_1"/>
    <property type="match status" value="1"/>
</dbReference>
<dbReference type="PROSITE" id="PS00329">
    <property type="entry name" value="HSP70_2"/>
    <property type="match status" value="1"/>
</dbReference>
<dbReference type="PROSITE" id="PS01036">
    <property type="entry name" value="HSP70_3"/>
    <property type="match status" value="1"/>
</dbReference>
<accession>A5V5P9</accession>
<feature type="chain" id="PRO_1000059674" description="Chaperone protein DnaK">
    <location>
        <begin position="1"/>
        <end position="630"/>
    </location>
</feature>
<feature type="region of interest" description="Disordered" evidence="2">
    <location>
        <begin position="604"/>
        <end position="630"/>
    </location>
</feature>
<feature type="compositionally biased region" description="Acidic residues" evidence="2">
    <location>
        <begin position="617"/>
        <end position="630"/>
    </location>
</feature>
<feature type="modified residue" description="Phosphothreonine; by autocatalysis" evidence="1">
    <location>
        <position position="198"/>
    </location>
</feature>
<gene>
    <name evidence="1" type="primary">dnaK</name>
    <name type="ordered locus">Swit_1250</name>
</gene>
<protein>
    <recommendedName>
        <fullName evidence="1">Chaperone protein DnaK</fullName>
    </recommendedName>
    <alternativeName>
        <fullName evidence="1">HSP70</fullName>
    </alternativeName>
    <alternativeName>
        <fullName evidence="1">Heat shock 70 kDa protein</fullName>
    </alternativeName>
    <alternativeName>
        <fullName evidence="1">Heat shock protein 70</fullName>
    </alternativeName>
</protein>
<evidence type="ECO:0000255" key="1">
    <source>
        <dbReference type="HAMAP-Rule" id="MF_00332"/>
    </source>
</evidence>
<evidence type="ECO:0000256" key="2">
    <source>
        <dbReference type="SAM" id="MobiDB-lite"/>
    </source>
</evidence>
<proteinExistence type="inferred from homology"/>
<reference key="1">
    <citation type="journal article" date="2010" name="J. Bacteriol.">
        <title>Genome sequence of the dioxin-mineralizing bacterium Sphingomonas wittichii RW1.</title>
        <authorList>
            <person name="Miller T.R."/>
            <person name="Delcher A.L."/>
            <person name="Salzberg S.L."/>
            <person name="Saunders E."/>
            <person name="Detter J.C."/>
            <person name="Halden R.U."/>
        </authorList>
    </citation>
    <scope>NUCLEOTIDE SEQUENCE [LARGE SCALE GENOMIC DNA]</scope>
    <source>
        <strain>DSM 6014 / CCUG 31198 / JCM 15750 / NBRC 105917 / EY 4224 / RW1</strain>
    </source>
</reference>
<sequence>MAKVIGIDLGTTNSCVAVMEGGKPKVIENAEGARTTPSIVAFAKDGERLIGQPAKRQAVTNPDNTIFAVKRLIGRRFDDPITRKDTELVPYHIVKGPNGDAWVQAGGEDYSPSQISAFTLQKMKETAESYLGETVTQAVITVPAYFNDAQRQATKDAGKIAGLEVLRIINEPTAAALAYGLEKNDGKTIAVYDLGGGTFDISILEIGDGVFEVKSTNGDTFLGGEDFDAKLVEFFAADFQKAEGIDLTKDRLALQRLKEAAEKAKIELSSAQTTEVNLPFITADATGPKHLVKSLTRADLERLVEPLIQRSIEPVKKALADAGLKAADIDEVVMVGGMTRMPKVREVVKSYFGKEPHTGVNPDEVVAMGAAIQAGVLQGDVKDVLLLDVTPLSLGIETLGGVFTRMIDRNTTIPTKKSQTYSTADDNQNAVTIRVFQGEREMAADNKMLGQFDLIGIPPAPRGVPQIEVTFDIDANGIVNVSAKDKGTGKEQQIKIQASGGLSDADIDGMVKDAEKFAEEDKKRRAAAEAKNNAESLIHTTERQLQEHGDKVDGGLKSEIEAAIADAKTAVEGGDADAMTEKAQALAQVAMKLGQAIYEKEQAAAAAPGEEAPKDDDVVDAEFSEVDDKK</sequence>